<protein>
    <recommendedName>
        <fullName>GRB2-associated-binding protein 1</fullName>
    </recommendedName>
    <alternativeName>
        <fullName>GRB2-associated binder 1</fullName>
    </alternativeName>
    <alternativeName>
        <fullName>Growth factor receptor bound protein 2-associated protein 1</fullName>
    </alternativeName>
</protein>
<comment type="function">
    <text evidence="2">Adapter protein that plays a role in intracellular signaling cascades triggered by activated receptor-type kinases. Plays a role in FGFR1 signaling. Probably involved in signaling by the epidermal growth factor receptor (EGFR) and the insulin receptor (INSR). Involved in the MET/HGF-signaling pathway.</text>
</comment>
<comment type="subunit">
    <text evidence="2 3">Identified in a complex containing FRS2, GRB2, GAB1, PIK3R1 and SOS1 (By similarity). Forms a tripartite complex containing GAB1, METTL13 and SPRY2 (By similarity). Within the complex interacts with METTL13 (By similarity). Interacts with GRB2 and with other SH2-containing proteins (By similarity). Interacts with phosphorylated LAT2 (By similarity). Interacts with PTPRJ (By similarity). Interacts (phosphorylated) with PTPN11 (By similarity). Interacts with HCK (By similarity).</text>
</comment>
<comment type="PTM">
    <text evidence="1">Phosphorylated in response to FGFR1 activation. Phosphorylated on tyrosine residue(s) by the epidermal growth factor receptor (EGFR) and the insulin receptor (INSR). Tyrosine phosphorylation of GAB1 mediates interaction with several proteins that contain SH2 domains. Phosphorylated on tyrosine residues by HCK upon IL6 signaling (By similarity).</text>
</comment>
<comment type="similarity">
    <text evidence="6">Belongs to the GAB family.</text>
</comment>
<sequence length="694" mass="76435">MSGGEVVCSGWLRKSPPEKKLKRYAWKRRWFVLRSGRLTGDPDVLEYYKNDHAKKPIRIIDLNLCQQVDAGLTFNKKEFENSYIFDINTIDRIFYLVADSEEEMNKWVRCICDICGFNPTEEDPVKAPGSSLQAPADIPLAISTAPPSSQVGASAAAAPPPYQLISLPPHLETLGIQEDPQDYLLLINCQSKKPEPTRTHADSAKSTSSETDCNDNVPSHKNPASSQSKHGVNGFFQQHMMYDSPPSRAASLSVDSSLYNLPRSYSHDVLPKVSPSSTEADGELYVFNTPSGTSSVEPQMRHVSISYDIPPTPGNTYQIPRTFPEGTLGQTSKLDTIPDIPPPRPPKPHPAHDRSPVDTCSITRTASDTDSSYCIPTAGLPPSRSNTISTVDLNKLRKDASSQDCYDTPRTFPSDRSSSLEGFHNHFKIKNILTAGSVSSEELDENYVPMNPNSPPRQHSSSFTEPIQEANYVPMTPGTFDFSSFGMQVPPPAHMGFRSSPKTPPRRPVPVADCEPPPVDRNLKPDRKVKPAPLEIKPLPEWEELQAPVRSPITRSFARDSSRFPLSPRPDSVHSTTSSSDSHDSEENYVPMNPNLSSEDSNLFGSNSLDGGNSPMIKPKGDKQVEYLDLDLDSGKSTPPRKQKSSGSGSSVADERVDYVVVDQQKTLALKSTREAWTDGRQSTESETPAKNVK</sequence>
<reference key="1">
    <citation type="submission" date="2007-06" db="EMBL/GenBank/DDBJ databases">
        <authorList>
            <consortium name="NIH - Mammalian Gene Collection (MGC) project"/>
        </authorList>
    </citation>
    <scope>NUCLEOTIDE SEQUENCE [LARGE SCALE MRNA]</scope>
    <source>
        <strain>Hereford</strain>
        <tissue>Hypothalamus</tissue>
    </source>
</reference>
<accession>A6QLU3</accession>
<proteinExistence type="evidence at transcript level"/>
<name>GAB1_BOVIN</name>
<dbReference type="EMBL" id="BC148087">
    <property type="protein sequence ID" value="AAI48088.1"/>
    <property type="molecule type" value="mRNA"/>
</dbReference>
<dbReference type="RefSeq" id="NP_001094671.1">
    <property type="nucleotide sequence ID" value="NM_001101201.1"/>
</dbReference>
<dbReference type="SMR" id="A6QLU3"/>
<dbReference type="BioGRID" id="196652">
    <property type="interactions" value="1"/>
</dbReference>
<dbReference type="FunCoup" id="A6QLU3">
    <property type="interactions" value="2029"/>
</dbReference>
<dbReference type="STRING" id="9913.ENSBTAP00000072118"/>
<dbReference type="PaxDb" id="9913-ENSBTAP00000029800"/>
<dbReference type="GeneID" id="540085"/>
<dbReference type="KEGG" id="bta:540085"/>
<dbReference type="CTD" id="2549"/>
<dbReference type="VEuPathDB" id="HostDB:ENSBTAG00000002813"/>
<dbReference type="eggNOG" id="KOG3751">
    <property type="taxonomic scope" value="Eukaryota"/>
</dbReference>
<dbReference type="HOGENOM" id="CLU_028652_0_0_1"/>
<dbReference type="InParanoid" id="A6QLU3"/>
<dbReference type="OMA" id="SHKDGEP"/>
<dbReference type="OrthoDB" id="67516at2759"/>
<dbReference type="TreeFam" id="TF329487"/>
<dbReference type="Reactome" id="R-BTA-109704">
    <property type="pathway name" value="PI3K Cascade"/>
</dbReference>
<dbReference type="Reactome" id="R-BTA-1257604">
    <property type="pathway name" value="PIP3 activates AKT signaling"/>
</dbReference>
<dbReference type="Reactome" id="R-BTA-180292">
    <property type="pathway name" value="GAB1 signalosome"/>
</dbReference>
<dbReference type="Reactome" id="R-BTA-1963642">
    <property type="pathway name" value="PI3K events in ERBB2 signaling"/>
</dbReference>
<dbReference type="Reactome" id="R-BTA-5654689">
    <property type="pathway name" value="PI-3K cascade:FGFR1"/>
</dbReference>
<dbReference type="Reactome" id="R-BTA-5654695">
    <property type="pathway name" value="PI-3K cascade:FGFR2"/>
</dbReference>
<dbReference type="Reactome" id="R-BTA-5654710">
    <property type="pathway name" value="PI-3K cascade:FGFR3"/>
</dbReference>
<dbReference type="Reactome" id="R-BTA-5654720">
    <property type="pathway name" value="PI-3K cascade:FGFR4"/>
</dbReference>
<dbReference type="Reactome" id="R-BTA-6811558">
    <property type="pathway name" value="PI5P, PP2A and IER3 Regulate PI3K/AKT Signaling"/>
</dbReference>
<dbReference type="Reactome" id="R-BTA-8851907">
    <property type="pathway name" value="MET activates PI3K/AKT signaling"/>
</dbReference>
<dbReference type="Reactome" id="R-BTA-8853659">
    <property type="pathway name" value="RET signaling"/>
</dbReference>
<dbReference type="Reactome" id="R-BTA-8865999">
    <property type="pathway name" value="MET activates PTPN11"/>
</dbReference>
<dbReference type="Reactome" id="R-BTA-8875555">
    <property type="pathway name" value="MET activates RAP1 and RAC1"/>
</dbReference>
<dbReference type="Reactome" id="R-BTA-8875656">
    <property type="pathway name" value="MET receptor recycling"/>
</dbReference>
<dbReference type="Reactome" id="R-BTA-9027276">
    <property type="pathway name" value="Erythropoietin activates Phosphoinositide-3-kinase (PI3K)"/>
</dbReference>
<dbReference type="Proteomes" id="UP000009136">
    <property type="component" value="Chromosome 17"/>
</dbReference>
<dbReference type="Bgee" id="ENSBTAG00000002813">
    <property type="expression patterns" value="Expressed in midbrain and 104 other cell types or tissues"/>
</dbReference>
<dbReference type="GO" id="GO:0005737">
    <property type="term" value="C:cytoplasm"/>
    <property type="evidence" value="ECO:0000318"/>
    <property type="project" value="GO_Central"/>
</dbReference>
<dbReference type="GO" id="GO:0035591">
    <property type="term" value="F:signaling adaptor activity"/>
    <property type="evidence" value="ECO:0000318"/>
    <property type="project" value="GO_Central"/>
</dbReference>
<dbReference type="GO" id="GO:0007165">
    <property type="term" value="P:signal transduction"/>
    <property type="evidence" value="ECO:0000318"/>
    <property type="project" value="GO_Central"/>
</dbReference>
<dbReference type="CDD" id="cd01266">
    <property type="entry name" value="PH_Gab1_Gab2"/>
    <property type="match status" value="1"/>
</dbReference>
<dbReference type="FunFam" id="2.30.29.30:FF:000166">
    <property type="entry name" value="GRB2-associated-binding protein 1 isoform X1"/>
    <property type="match status" value="1"/>
</dbReference>
<dbReference type="Gene3D" id="2.30.29.30">
    <property type="entry name" value="Pleckstrin-homology domain (PH domain)/Phosphotyrosine-binding domain (PTB)"/>
    <property type="match status" value="1"/>
</dbReference>
<dbReference type="InterPro" id="IPR046355">
    <property type="entry name" value="Gab1-4-like"/>
</dbReference>
<dbReference type="InterPro" id="IPR011993">
    <property type="entry name" value="PH-like_dom_sf"/>
</dbReference>
<dbReference type="InterPro" id="IPR001849">
    <property type="entry name" value="PH_domain"/>
</dbReference>
<dbReference type="PANTHER" id="PTHR45960">
    <property type="entry name" value="GRB2-ASSOCIATED-BINDING PROTEIN"/>
    <property type="match status" value="1"/>
</dbReference>
<dbReference type="PANTHER" id="PTHR45960:SF5">
    <property type="entry name" value="GRB2-ASSOCIATED-BINDING PROTEIN 1"/>
    <property type="match status" value="1"/>
</dbReference>
<dbReference type="Pfam" id="PF00169">
    <property type="entry name" value="PH"/>
    <property type="match status" value="1"/>
</dbReference>
<dbReference type="SMART" id="SM00233">
    <property type="entry name" value="PH"/>
    <property type="match status" value="1"/>
</dbReference>
<dbReference type="SUPFAM" id="SSF50729">
    <property type="entry name" value="PH domain-like"/>
    <property type="match status" value="1"/>
</dbReference>
<dbReference type="PROSITE" id="PS50003">
    <property type="entry name" value="PH_DOMAIN"/>
    <property type="match status" value="1"/>
</dbReference>
<feature type="initiator methionine" description="Removed" evidence="2">
    <location>
        <position position="1"/>
    </location>
</feature>
<feature type="chain" id="PRO_0000318942" description="GRB2-associated-binding protein 1">
    <location>
        <begin position="2"/>
        <end position="694"/>
    </location>
</feature>
<feature type="domain" description="PH" evidence="4">
    <location>
        <begin position="5"/>
        <end position="116"/>
    </location>
</feature>
<feature type="region of interest" description="Disordered" evidence="5">
    <location>
        <begin position="194"/>
        <end position="231"/>
    </location>
</feature>
<feature type="region of interest" description="Disordered" evidence="5">
    <location>
        <begin position="309"/>
        <end position="378"/>
    </location>
</feature>
<feature type="region of interest" description="Disordered" evidence="5">
    <location>
        <begin position="492"/>
        <end position="532"/>
    </location>
</feature>
<feature type="region of interest" description="Disordered" evidence="5">
    <location>
        <begin position="560"/>
        <end position="656"/>
    </location>
</feature>
<feature type="region of interest" description="Disordered" evidence="5">
    <location>
        <begin position="668"/>
        <end position="694"/>
    </location>
</feature>
<feature type="compositionally biased region" description="Basic and acidic residues" evidence="5">
    <location>
        <begin position="194"/>
        <end position="203"/>
    </location>
</feature>
<feature type="compositionally biased region" description="Polar residues" evidence="5">
    <location>
        <begin position="204"/>
        <end position="230"/>
    </location>
</feature>
<feature type="compositionally biased region" description="Polar residues" evidence="5">
    <location>
        <begin position="358"/>
        <end position="374"/>
    </location>
</feature>
<feature type="compositionally biased region" description="Polar residues" evidence="5">
    <location>
        <begin position="594"/>
        <end position="611"/>
    </location>
</feature>
<feature type="compositionally biased region" description="Basic and acidic residues" evidence="5">
    <location>
        <begin position="672"/>
        <end position="684"/>
    </location>
</feature>
<feature type="compositionally biased region" description="Polar residues" evidence="5">
    <location>
        <begin position="685"/>
        <end position="694"/>
    </location>
</feature>
<feature type="modified residue" description="N-acetylserine" evidence="2">
    <location>
        <position position="2"/>
    </location>
</feature>
<feature type="modified residue" description="Phosphoserine" evidence="2">
    <location>
        <position position="251"/>
    </location>
</feature>
<feature type="modified residue" description="Phosphoserine" evidence="2">
    <location>
        <position position="253"/>
    </location>
</feature>
<feature type="modified residue" description="Phosphoserine" evidence="2">
    <location>
        <position position="266"/>
    </location>
</feature>
<feature type="modified residue" description="Phosphoserine" evidence="2">
    <location>
        <position position="304"/>
    </location>
</feature>
<feature type="modified residue" description="Phosphothreonine" evidence="2">
    <location>
        <position position="387"/>
    </location>
</feature>
<feature type="modified residue" description="Phosphoserine" evidence="2">
    <location>
        <position position="402"/>
    </location>
</feature>
<feature type="modified residue" description="Phosphoserine" evidence="3">
    <location>
        <position position="454"/>
    </location>
</feature>
<feature type="modified residue" description="Phosphotyrosine" evidence="2">
    <location>
        <position position="627"/>
    </location>
</feature>
<feature type="modified residue" description="Phosphothreonine" evidence="2">
    <location>
        <position position="638"/>
    </location>
</feature>
<feature type="modified residue" description="Phosphoserine" evidence="2">
    <location>
        <position position="651"/>
    </location>
</feature>
<feature type="modified residue" description="Phosphotyrosine" evidence="2">
    <location>
        <position position="659"/>
    </location>
</feature>
<feature type="modified residue" description="Phosphoserine" evidence="2">
    <location>
        <position position="683"/>
    </location>
</feature>
<gene>
    <name type="primary">GAB1</name>
</gene>
<organism>
    <name type="scientific">Bos taurus</name>
    <name type="common">Bovine</name>
    <dbReference type="NCBI Taxonomy" id="9913"/>
    <lineage>
        <taxon>Eukaryota</taxon>
        <taxon>Metazoa</taxon>
        <taxon>Chordata</taxon>
        <taxon>Craniata</taxon>
        <taxon>Vertebrata</taxon>
        <taxon>Euteleostomi</taxon>
        <taxon>Mammalia</taxon>
        <taxon>Eutheria</taxon>
        <taxon>Laurasiatheria</taxon>
        <taxon>Artiodactyla</taxon>
        <taxon>Ruminantia</taxon>
        <taxon>Pecora</taxon>
        <taxon>Bovidae</taxon>
        <taxon>Bovinae</taxon>
        <taxon>Bos</taxon>
    </lineage>
</organism>
<keyword id="KW-0007">Acetylation</keyword>
<keyword id="KW-0597">Phosphoprotein</keyword>
<keyword id="KW-1185">Reference proteome</keyword>
<evidence type="ECO:0000250" key="1"/>
<evidence type="ECO:0000250" key="2">
    <source>
        <dbReference type="UniProtKB" id="Q13480"/>
    </source>
</evidence>
<evidence type="ECO:0000250" key="3">
    <source>
        <dbReference type="UniProtKB" id="Q9QYY0"/>
    </source>
</evidence>
<evidence type="ECO:0000255" key="4">
    <source>
        <dbReference type="PROSITE-ProRule" id="PRU00145"/>
    </source>
</evidence>
<evidence type="ECO:0000256" key="5">
    <source>
        <dbReference type="SAM" id="MobiDB-lite"/>
    </source>
</evidence>
<evidence type="ECO:0000305" key="6"/>